<name>BRK1_DANRE</name>
<gene>
    <name type="primary">brk1</name>
    <name type="ORF">zgc:86903</name>
</gene>
<comment type="function">
    <text evidence="1">Involved in regulation of actin and microtubule organization. Part of a WAVE complex that activates the Arp2/3 complex (By similarity).</text>
</comment>
<comment type="subcellular location">
    <subcellularLocation>
        <location evidence="1">Cytoplasm</location>
        <location evidence="1">Cytoskeleton</location>
    </subcellularLocation>
</comment>
<comment type="similarity">
    <text evidence="3">Belongs to the BRK1 family.</text>
</comment>
<protein>
    <recommendedName>
        <fullName>Probable protein BRICK1</fullName>
    </recommendedName>
</protein>
<dbReference type="EMBL" id="BC071524">
    <property type="protein sequence ID" value="AAH71524.1"/>
    <property type="molecule type" value="mRNA"/>
</dbReference>
<dbReference type="RefSeq" id="NP_001002097.1">
    <property type="nucleotide sequence ID" value="NM_001002097.1"/>
</dbReference>
<dbReference type="RefSeq" id="XP_005172960.1">
    <property type="nucleotide sequence ID" value="XM_005172903.3"/>
</dbReference>
<dbReference type="SMR" id="Q6IQ86"/>
<dbReference type="FunCoup" id="Q6IQ86">
    <property type="interactions" value="1400"/>
</dbReference>
<dbReference type="STRING" id="7955.ENSDARP00000061519"/>
<dbReference type="PaxDb" id="7955-ENSDARP00000061519"/>
<dbReference type="Ensembl" id="ENSDART00000124935">
    <property type="protein sequence ID" value="ENSDARP00000112352"/>
    <property type="gene ID" value="ENSDARG00000041974"/>
</dbReference>
<dbReference type="Ensembl" id="ENSDART00000184229">
    <property type="protein sequence ID" value="ENSDARP00000152289"/>
    <property type="gene ID" value="ENSDARG00000041974"/>
</dbReference>
<dbReference type="GeneID" id="415187"/>
<dbReference type="KEGG" id="dre:415187"/>
<dbReference type="AGR" id="ZFIN:ZDB-GENE-040625-77"/>
<dbReference type="CTD" id="55845"/>
<dbReference type="ZFIN" id="ZDB-GENE-040625-77">
    <property type="gene designation" value="brk1"/>
</dbReference>
<dbReference type="eggNOG" id="ENOG502S3PY">
    <property type="taxonomic scope" value="Eukaryota"/>
</dbReference>
<dbReference type="HOGENOM" id="CLU_175202_0_0_1"/>
<dbReference type="InParanoid" id="Q6IQ86"/>
<dbReference type="OMA" id="WEQREFI"/>
<dbReference type="OrthoDB" id="1883432at2759"/>
<dbReference type="PhylomeDB" id="Q6IQ86"/>
<dbReference type="TreeFam" id="TF324876"/>
<dbReference type="PRO" id="PR:Q6IQ86"/>
<dbReference type="Proteomes" id="UP000000437">
    <property type="component" value="Chromosome 11"/>
</dbReference>
<dbReference type="Bgee" id="ENSDARG00000041974">
    <property type="expression patterns" value="Expressed in brain and 26 other cell types or tissues"/>
</dbReference>
<dbReference type="ExpressionAtlas" id="Q6IQ86">
    <property type="expression patterns" value="baseline"/>
</dbReference>
<dbReference type="GO" id="GO:0005856">
    <property type="term" value="C:cytoskeleton"/>
    <property type="evidence" value="ECO:0007669"/>
    <property type="project" value="UniProtKB-SubCell"/>
</dbReference>
<dbReference type="GO" id="GO:0031209">
    <property type="term" value="C:SCAR complex"/>
    <property type="evidence" value="ECO:0000318"/>
    <property type="project" value="GO_Central"/>
</dbReference>
<dbReference type="GO" id="GO:0044877">
    <property type="term" value="F:protein-containing complex binding"/>
    <property type="evidence" value="ECO:0007669"/>
    <property type="project" value="InterPro"/>
</dbReference>
<dbReference type="GO" id="GO:0007015">
    <property type="term" value="P:actin filament organization"/>
    <property type="evidence" value="ECO:0007669"/>
    <property type="project" value="InterPro"/>
</dbReference>
<dbReference type="GO" id="GO:0048870">
    <property type="term" value="P:cell motility"/>
    <property type="evidence" value="ECO:0000318"/>
    <property type="project" value="GO_Central"/>
</dbReference>
<dbReference type="GO" id="GO:0008064">
    <property type="term" value="P:regulation of actin polymerization or depolymerization"/>
    <property type="evidence" value="ECO:0000318"/>
    <property type="project" value="GO_Central"/>
</dbReference>
<dbReference type="FunFam" id="1.20.5.110:FF:000017">
    <property type="entry name" value="BRICK1, SCAR/WAVE actin-nucleating complex subunit"/>
    <property type="match status" value="1"/>
</dbReference>
<dbReference type="Gene3D" id="1.20.5.110">
    <property type="match status" value="1"/>
</dbReference>
<dbReference type="InterPro" id="IPR033378">
    <property type="entry name" value="BRICK1"/>
</dbReference>
<dbReference type="PANTHER" id="PTHR33668">
    <property type="entry name" value="PROTEIN BRICK1"/>
    <property type="match status" value="1"/>
</dbReference>
<dbReference type="PANTHER" id="PTHR33668:SF1">
    <property type="entry name" value="PROTEIN BRICK1"/>
    <property type="match status" value="1"/>
</dbReference>
<reference key="1">
    <citation type="submission" date="2004-06" db="EMBL/GenBank/DDBJ databases">
        <authorList>
            <consortium name="NIH - Zebrafish Gene Collection (ZGC) project"/>
        </authorList>
    </citation>
    <scope>NUCLEOTIDE SEQUENCE [LARGE SCALE MRNA]</scope>
    <source>
        <tissue>Embryo</tissue>
    </source>
</reference>
<accession>Q6IQ86</accession>
<evidence type="ECO:0000250" key="1"/>
<evidence type="ECO:0000255" key="2"/>
<evidence type="ECO:0000305" key="3"/>
<proteinExistence type="inferred from homology"/>
<feature type="chain" id="PRO_0000283648" description="Probable protein BRICK1">
    <location>
        <begin position="1"/>
        <end position="75"/>
    </location>
</feature>
<feature type="coiled-coil region" evidence="2">
    <location>
        <begin position="41"/>
        <end position="72"/>
    </location>
</feature>
<keyword id="KW-0175">Coiled coil</keyword>
<keyword id="KW-0963">Cytoplasm</keyword>
<keyword id="KW-0206">Cytoskeleton</keyword>
<keyword id="KW-1185">Reference proteome</keyword>
<sequence>MAGQEDPVQREIHQDWANREYIEVITSSIKKIADFLNSFDMSCRSRLATLNEKLTALERRIEYIEARVTKGETLT</sequence>
<organism>
    <name type="scientific">Danio rerio</name>
    <name type="common">Zebrafish</name>
    <name type="synonym">Brachydanio rerio</name>
    <dbReference type="NCBI Taxonomy" id="7955"/>
    <lineage>
        <taxon>Eukaryota</taxon>
        <taxon>Metazoa</taxon>
        <taxon>Chordata</taxon>
        <taxon>Craniata</taxon>
        <taxon>Vertebrata</taxon>
        <taxon>Euteleostomi</taxon>
        <taxon>Actinopterygii</taxon>
        <taxon>Neopterygii</taxon>
        <taxon>Teleostei</taxon>
        <taxon>Ostariophysi</taxon>
        <taxon>Cypriniformes</taxon>
        <taxon>Danionidae</taxon>
        <taxon>Danioninae</taxon>
        <taxon>Danio</taxon>
    </lineage>
</organism>